<organism>
    <name type="scientific">Bacillus subtilis</name>
    <dbReference type="NCBI Taxonomy" id="1423"/>
    <lineage>
        <taxon>Bacteria</taxon>
        <taxon>Bacillati</taxon>
        <taxon>Bacillota</taxon>
        <taxon>Bacilli</taxon>
        <taxon>Bacillales</taxon>
        <taxon>Bacillaceae</taxon>
        <taxon>Bacillus</taxon>
    </lineage>
</organism>
<name>LP14_BACIU</name>
<reference key="1">
    <citation type="journal article" date="1993" name="J. Ferment. Bioeng.">
        <title>Nucleotide sequence and characteristics of a gene, lpa-14 responsible for the biosynthesis of the lipopeptide antibiotics iturin A and surfactin from Bacillus subtilis RB14.</title>
        <authorList>
            <person name="Huang C.-C."/>
            <person name="Ano T."/>
            <person name="Shoda M."/>
        </authorList>
    </citation>
    <scope>NUCLEOTIDE SEQUENCE [GENOMIC DNA]</scope>
    <source>
        <strain>RB14</strain>
    </source>
</reference>
<reference key="2">
    <citation type="submission" date="2000-02" db="EMBL/GenBank/DDBJ databases">
        <title>The lpa gene of Bacillus subtilis A13 affects a spectrum of antibiotic syntheses.</title>
        <authorList>
            <person name="Conrad B."/>
            <person name="Feesche J."/>
            <person name="Steinborn G."/>
            <person name="Adler B."/>
            <person name="Hofemeister J."/>
        </authorList>
    </citation>
    <scope>NUCLEOTIDE SEQUENCE [GENOMIC DNA]</scope>
    <source>
        <strain>A13</strain>
    </source>
</reference>
<reference key="3">
    <citation type="submission" date="2001-05" db="EMBL/GenBank/DDBJ databases">
        <title>Putative phosphopantetheinyltransferase gene for biosurfactants production in Bacillus subtilis BBK-1.</title>
        <authorList>
            <person name="Roongsawang N."/>
            <person name="Morikawa M."/>
            <person name="Kanaya S."/>
        </authorList>
    </citation>
    <scope>NUCLEOTIDE SEQUENCE [GENOMIC DNA]</scope>
    <source>
        <strain>BBK-1</strain>
    </source>
</reference>
<reference key="4">
    <citation type="submission" date="2001-06" db="EMBL/GenBank/DDBJ databases">
        <title>Genetic loci required for biosynthesis of lipopeptide antibiotics iturin A and surfactin in Bacillus subtilis B3.</title>
        <authorList>
            <person name="Yao S."/>
            <person name="Fuchsbauer N."/>
            <person name="Hillen W."/>
        </authorList>
    </citation>
    <scope>NUCLEOTIDE SEQUENCE [GENOMIC DNA]</scope>
    <source>
        <strain>B3</strain>
    </source>
</reference>
<reference key="5">
    <citation type="journal article" date="1996" name="Chem. Biol.">
        <title>A new enzyme superfamily -- the phosphopantetheinyl transferases.</title>
        <authorList>
            <person name="Lambalot R.H."/>
            <person name="Gehring A.M."/>
            <person name="Flugel R.S."/>
            <person name="Zuber P."/>
            <person name="LaCelle M."/>
            <person name="Marahiel M.A."/>
            <person name="Reid R."/>
            <person name="Khosla C."/>
            <person name="Walsh C.T."/>
        </authorList>
    </citation>
    <scope>PROBABLE FUNCTION</scope>
</reference>
<protein>
    <recommendedName>
        <fullName>4'-phosphopantetheinyl transferase</fullName>
        <ecNumber>2.7.8.-</ecNumber>
    </recommendedName>
    <alternativeName>
        <fullName>Lipopeptide antibiotics iturin A and surfactin biosynthesis protein</fullName>
    </alternativeName>
</protein>
<keyword id="KW-0045">Antibiotic biosynthesis</keyword>
<keyword id="KW-0460">Magnesium</keyword>
<keyword id="KW-0479">Metal-binding</keyword>
<keyword id="KW-0808">Transferase</keyword>
<accession>P39144</accession>
<accession>Q939C8</accession>
<accession>Q93R68</accession>
<accession>Q9KIG7</accession>
<feature type="chain" id="PRO_0000206079" description="4'-phosphopantetheinyl transferase">
    <location>
        <begin position="1"/>
        <end position="224"/>
    </location>
</feature>
<feature type="region of interest" description="Peptidyl carrier protein binding" evidence="2">
    <location>
        <begin position="158"/>
        <end position="189"/>
    </location>
</feature>
<feature type="binding site" evidence="1">
    <location>
        <position position="107"/>
    </location>
    <ligand>
        <name>Mg(2+)</name>
        <dbReference type="ChEBI" id="CHEBI:18420"/>
    </ligand>
</feature>
<feature type="binding site" evidence="1">
    <location>
        <position position="109"/>
    </location>
    <ligand>
        <name>Mg(2+)</name>
        <dbReference type="ChEBI" id="CHEBI:18420"/>
    </ligand>
</feature>
<feature type="binding site" evidence="1">
    <location>
        <position position="151"/>
    </location>
    <ligand>
        <name>Mg(2+)</name>
        <dbReference type="ChEBI" id="CHEBI:18420"/>
    </ligand>
</feature>
<feature type="sequence variant" description="In strain: B3.">
    <original>G</original>
    <variation>E</variation>
    <location>
        <position position="15"/>
    </location>
</feature>
<feature type="sequence variant" description="In strain: BBK-1.">
    <original>A</original>
    <variation>T</variation>
    <location>
        <position position="22"/>
    </location>
</feature>
<feature type="sequence variant" description="In strain: BBK-1.">
    <original>G</original>
    <variation>A</variation>
    <location>
        <position position="65"/>
    </location>
</feature>
<feature type="sequence variant" description="In strain: A13, BBK-1 and B3.">
    <original>G</original>
    <variation>S</variation>
    <location>
        <position position="69"/>
    </location>
</feature>
<feature type="sequence variant" description="In strain: A13 and B3.">
    <original>D</original>
    <variation>E</variation>
    <location>
        <position position="195"/>
    </location>
</feature>
<feature type="sequence variant" description="In strain: BBK-1.">
    <original>E</original>
    <variation>A</variation>
    <location>
        <position position="216"/>
    </location>
</feature>
<sequence>MKIYGVYMDRPLSAGEEDRMMAAVSAEKREKCRRFYHKEDAHRTLIGDMLIRTAAAKAYGLDPAGISFGVQEYGKPYIPALPDMHFNISHSGRWIVCAVDSKPIGIDIEKMKPGTIDIAKRFFSPTEYSDLQAKHPDQQTDYFYHLWSMKESFIKQAGKGLSLPLDSFSVRLKDDGHVSIELPDGHEPCFIRTYDADEEYKLAVCAAHPDFCDGIEMKTYEELL</sequence>
<dbReference type="EC" id="2.7.8.-"/>
<dbReference type="EMBL" id="D21876">
    <property type="protein sequence ID" value="BAA04883.1"/>
    <property type="molecule type" value="Genomic_DNA"/>
</dbReference>
<dbReference type="EMBL" id="AF233756">
    <property type="protein sequence ID" value="AAF87219.1"/>
    <property type="molecule type" value="Genomic_DNA"/>
</dbReference>
<dbReference type="EMBL" id="AB062550">
    <property type="protein sequence ID" value="BAB58965.1"/>
    <property type="molecule type" value="Genomic_DNA"/>
</dbReference>
<dbReference type="EMBL" id="AY040867">
    <property type="protein sequence ID" value="AAL10666.1"/>
    <property type="molecule type" value="Genomic_DNA"/>
</dbReference>
<dbReference type="PIR" id="I39875">
    <property type="entry name" value="I39875"/>
</dbReference>
<dbReference type="SMR" id="P39144"/>
<dbReference type="GO" id="GO:0005829">
    <property type="term" value="C:cytosol"/>
    <property type="evidence" value="ECO:0007669"/>
    <property type="project" value="TreeGrafter"/>
</dbReference>
<dbReference type="GO" id="GO:0008897">
    <property type="term" value="F:holo-[acyl-carrier-protein] synthase activity"/>
    <property type="evidence" value="ECO:0007669"/>
    <property type="project" value="InterPro"/>
</dbReference>
<dbReference type="GO" id="GO:0000287">
    <property type="term" value="F:magnesium ion binding"/>
    <property type="evidence" value="ECO:0007669"/>
    <property type="project" value="InterPro"/>
</dbReference>
<dbReference type="GO" id="GO:0017000">
    <property type="term" value="P:antibiotic biosynthetic process"/>
    <property type="evidence" value="ECO:0007669"/>
    <property type="project" value="UniProtKB-KW"/>
</dbReference>
<dbReference type="GO" id="GO:0006633">
    <property type="term" value="P:fatty acid biosynthetic process"/>
    <property type="evidence" value="ECO:0007669"/>
    <property type="project" value="InterPro"/>
</dbReference>
<dbReference type="GO" id="GO:0019878">
    <property type="term" value="P:lysine biosynthetic process via aminoadipic acid"/>
    <property type="evidence" value="ECO:0007669"/>
    <property type="project" value="TreeGrafter"/>
</dbReference>
<dbReference type="Gene3D" id="3.90.470.20">
    <property type="entry name" value="4'-phosphopantetheinyl transferase domain"/>
    <property type="match status" value="2"/>
</dbReference>
<dbReference type="InterPro" id="IPR008278">
    <property type="entry name" value="4-PPantetheinyl_Trfase_dom"/>
</dbReference>
<dbReference type="InterPro" id="IPR037143">
    <property type="entry name" value="4-PPantetheinyl_Trfase_dom_sf"/>
</dbReference>
<dbReference type="InterPro" id="IPR055066">
    <property type="entry name" value="AASDHPPT_N"/>
</dbReference>
<dbReference type="InterPro" id="IPR050559">
    <property type="entry name" value="P-Pant_transferase_sf"/>
</dbReference>
<dbReference type="InterPro" id="IPR004568">
    <property type="entry name" value="Ppantetheine-prot_Trfase_dom"/>
</dbReference>
<dbReference type="NCBIfam" id="TIGR00556">
    <property type="entry name" value="pantethn_trn"/>
    <property type="match status" value="1"/>
</dbReference>
<dbReference type="PANTHER" id="PTHR12215:SF10">
    <property type="entry name" value="L-AMINOADIPATE-SEMIALDEHYDE DEHYDROGENASE-PHOSPHOPANTETHEINYL TRANSFERASE"/>
    <property type="match status" value="1"/>
</dbReference>
<dbReference type="PANTHER" id="PTHR12215">
    <property type="entry name" value="PHOSPHOPANTETHEINE TRANSFERASE"/>
    <property type="match status" value="1"/>
</dbReference>
<dbReference type="Pfam" id="PF22624">
    <property type="entry name" value="AASDHPPT_N"/>
    <property type="match status" value="1"/>
</dbReference>
<dbReference type="Pfam" id="PF01648">
    <property type="entry name" value="ACPS"/>
    <property type="match status" value="1"/>
</dbReference>
<dbReference type="SUPFAM" id="SSF56214">
    <property type="entry name" value="4'-phosphopantetheinyl transferase"/>
    <property type="match status" value="2"/>
</dbReference>
<gene>
    <name type="primary">lpa-14</name>
    <name type="synonym">lpaA13</name>
    <name type="synonym">lpaB3</name>
    <name type="synonym">sfp-B</name>
</gene>
<proteinExistence type="inferred from homology"/>
<comment type="function">
    <text>May activate the peptidyl carrier protein (PCP) domains of surfactin synthetase SRF1/2/3 and iturin A synthetase, by transferring the 4'-phosphopantetheinyl moiety of coenzyme A (CoA) to a serine residue. Required for the coproduction of the lipopeptide antibiotics, iturin A and surfactin.</text>
</comment>
<comment type="catalytic activity">
    <reaction>
        <text>apo-[peptidyl-carrier protein] + CoA = holo-[peptidyl-carrier protein] + adenosine 3',5'-bisphosphate + H(+)</text>
        <dbReference type="Rhea" id="RHEA:46228"/>
        <dbReference type="Rhea" id="RHEA-COMP:11479"/>
        <dbReference type="Rhea" id="RHEA-COMP:11480"/>
        <dbReference type="ChEBI" id="CHEBI:15378"/>
        <dbReference type="ChEBI" id="CHEBI:29999"/>
        <dbReference type="ChEBI" id="CHEBI:57287"/>
        <dbReference type="ChEBI" id="CHEBI:58343"/>
        <dbReference type="ChEBI" id="CHEBI:64479"/>
    </reaction>
</comment>
<comment type="cofactor">
    <cofactor evidence="1">
        <name>Mg(2+)</name>
        <dbReference type="ChEBI" id="CHEBI:18420"/>
    </cofactor>
</comment>
<comment type="similarity">
    <text evidence="3">Belongs to the P-Pant transferase superfamily. Gsp/Sfp/HetI/AcpT family.</text>
</comment>
<evidence type="ECO:0000250" key="1"/>
<evidence type="ECO:0000255" key="2"/>
<evidence type="ECO:0000305" key="3"/>